<feature type="chain" id="PRO_0000265224" description="Large ribosomal subunit protein uL6">
    <location>
        <begin position="1"/>
        <end position="180"/>
    </location>
</feature>
<name>RL6_BORAP</name>
<proteinExistence type="inferred from homology"/>
<gene>
    <name evidence="1" type="primary">rplF</name>
    <name type="ordered locus">BAPKO_0521</name>
    <name type="ordered locus">BafPKo_0509</name>
</gene>
<accession>Q0SN14</accession>
<accession>G0ISD6</accession>
<dbReference type="EMBL" id="CP000395">
    <property type="protein sequence ID" value="ABH01764.1"/>
    <property type="molecule type" value="Genomic_DNA"/>
</dbReference>
<dbReference type="EMBL" id="CP002933">
    <property type="protein sequence ID" value="AEL69717.1"/>
    <property type="molecule type" value="Genomic_DNA"/>
</dbReference>
<dbReference type="RefSeq" id="WP_004789935.1">
    <property type="nucleotide sequence ID" value="NZ_CP160066.1"/>
</dbReference>
<dbReference type="SMR" id="Q0SN14"/>
<dbReference type="STRING" id="29518.BLA32_01795"/>
<dbReference type="GeneID" id="77265340"/>
<dbReference type="KEGG" id="baf:BAPKO_0521"/>
<dbReference type="KEGG" id="bafz:BafPKo_0509"/>
<dbReference type="PATRIC" id="fig|390236.22.peg.490"/>
<dbReference type="eggNOG" id="COG0097">
    <property type="taxonomic scope" value="Bacteria"/>
</dbReference>
<dbReference type="HOGENOM" id="CLU_065464_1_2_12"/>
<dbReference type="OrthoDB" id="9805007at2"/>
<dbReference type="Proteomes" id="UP000005216">
    <property type="component" value="Chromosome"/>
</dbReference>
<dbReference type="GO" id="GO:0022625">
    <property type="term" value="C:cytosolic large ribosomal subunit"/>
    <property type="evidence" value="ECO:0007669"/>
    <property type="project" value="TreeGrafter"/>
</dbReference>
<dbReference type="GO" id="GO:0019843">
    <property type="term" value="F:rRNA binding"/>
    <property type="evidence" value="ECO:0007669"/>
    <property type="project" value="UniProtKB-UniRule"/>
</dbReference>
<dbReference type="GO" id="GO:0003735">
    <property type="term" value="F:structural constituent of ribosome"/>
    <property type="evidence" value="ECO:0007669"/>
    <property type="project" value="InterPro"/>
</dbReference>
<dbReference type="GO" id="GO:0002181">
    <property type="term" value="P:cytoplasmic translation"/>
    <property type="evidence" value="ECO:0007669"/>
    <property type="project" value="TreeGrafter"/>
</dbReference>
<dbReference type="FunFam" id="3.90.930.12:FF:000001">
    <property type="entry name" value="50S ribosomal protein L6"/>
    <property type="match status" value="1"/>
</dbReference>
<dbReference type="FunFam" id="3.90.930.12:FF:000002">
    <property type="entry name" value="50S ribosomal protein L6"/>
    <property type="match status" value="1"/>
</dbReference>
<dbReference type="Gene3D" id="3.90.930.12">
    <property type="entry name" value="Ribosomal protein L6, alpha-beta domain"/>
    <property type="match status" value="2"/>
</dbReference>
<dbReference type="HAMAP" id="MF_01365_B">
    <property type="entry name" value="Ribosomal_uL6_B"/>
    <property type="match status" value="1"/>
</dbReference>
<dbReference type="InterPro" id="IPR000702">
    <property type="entry name" value="Ribosomal_uL6-like"/>
</dbReference>
<dbReference type="InterPro" id="IPR036789">
    <property type="entry name" value="Ribosomal_uL6-like_a/b-dom_sf"/>
</dbReference>
<dbReference type="InterPro" id="IPR020040">
    <property type="entry name" value="Ribosomal_uL6_a/b-dom"/>
</dbReference>
<dbReference type="InterPro" id="IPR019906">
    <property type="entry name" value="Ribosomal_uL6_bac-type"/>
</dbReference>
<dbReference type="InterPro" id="IPR002358">
    <property type="entry name" value="Ribosomal_uL6_CS"/>
</dbReference>
<dbReference type="NCBIfam" id="TIGR03654">
    <property type="entry name" value="L6_bact"/>
    <property type="match status" value="1"/>
</dbReference>
<dbReference type="PANTHER" id="PTHR11655">
    <property type="entry name" value="60S/50S RIBOSOMAL PROTEIN L6/L9"/>
    <property type="match status" value="1"/>
</dbReference>
<dbReference type="PANTHER" id="PTHR11655:SF14">
    <property type="entry name" value="LARGE RIBOSOMAL SUBUNIT PROTEIN UL6M"/>
    <property type="match status" value="1"/>
</dbReference>
<dbReference type="Pfam" id="PF00347">
    <property type="entry name" value="Ribosomal_L6"/>
    <property type="match status" value="2"/>
</dbReference>
<dbReference type="PIRSF" id="PIRSF002162">
    <property type="entry name" value="Ribosomal_L6"/>
    <property type="match status" value="1"/>
</dbReference>
<dbReference type="PRINTS" id="PR00059">
    <property type="entry name" value="RIBOSOMALL6"/>
</dbReference>
<dbReference type="SUPFAM" id="SSF56053">
    <property type="entry name" value="Ribosomal protein L6"/>
    <property type="match status" value="2"/>
</dbReference>
<dbReference type="PROSITE" id="PS00525">
    <property type="entry name" value="RIBOSOMAL_L6_1"/>
    <property type="match status" value="1"/>
</dbReference>
<sequence>MSRIGRLPIKIPDTVKIDVKDNLVIVEGIRGRLVQNIKDSINVKVENGSVIVGRVFNDKKAKAYHGLYRSLIFNMIKGVTEGFSKSLTINGIGYRAEQQGNSLFLSLGYSTQFEYVIPDGVSVKLDGNTKISVEGIDKFKVGQVAAEIRSLKKPEPYKGKGIKYDNEIIRRKVGKSGVKK</sequence>
<organism>
    <name type="scientific">Borreliella afzelii (strain PKo)</name>
    <name type="common">Borrelia afzelii</name>
    <dbReference type="NCBI Taxonomy" id="390236"/>
    <lineage>
        <taxon>Bacteria</taxon>
        <taxon>Pseudomonadati</taxon>
        <taxon>Spirochaetota</taxon>
        <taxon>Spirochaetia</taxon>
        <taxon>Spirochaetales</taxon>
        <taxon>Borreliaceae</taxon>
        <taxon>Borreliella</taxon>
    </lineage>
</organism>
<protein>
    <recommendedName>
        <fullName evidence="1">Large ribosomal subunit protein uL6</fullName>
    </recommendedName>
    <alternativeName>
        <fullName evidence="2">50S ribosomal protein L6</fullName>
    </alternativeName>
</protein>
<evidence type="ECO:0000255" key="1">
    <source>
        <dbReference type="HAMAP-Rule" id="MF_01365"/>
    </source>
</evidence>
<evidence type="ECO:0000305" key="2"/>
<reference key="1">
    <citation type="journal article" date="2006" name="BMC Genomics">
        <title>Comparative genome analysis: selection pressure on the Borrelia vls cassettes is essential for infectivity.</title>
        <authorList>
            <person name="Gloeckner G."/>
            <person name="Schulte-Spechtel U."/>
            <person name="Schilhabel M."/>
            <person name="Felder M."/>
            <person name="Suehnel J."/>
            <person name="Wilske B."/>
            <person name="Platzer M."/>
        </authorList>
    </citation>
    <scope>NUCLEOTIDE SEQUENCE [LARGE SCALE GENOMIC DNA]</scope>
    <source>
        <strain>PKo</strain>
    </source>
</reference>
<reference key="2">
    <citation type="journal article" date="2011" name="J. Bacteriol.">
        <title>Whole-genome sequences of two Borrelia afzelii and two Borrelia garinii Lyme disease agent isolates.</title>
        <authorList>
            <person name="Casjens S.R."/>
            <person name="Mongodin E.F."/>
            <person name="Qiu W.G."/>
            <person name="Dunn J.J."/>
            <person name="Luft B.J."/>
            <person name="Fraser-Liggett C.M."/>
            <person name="Schutzer S.E."/>
        </authorList>
    </citation>
    <scope>NUCLEOTIDE SEQUENCE [LARGE SCALE GENOMIC DNA]</scope>
    <source>
        <strain>PKo</strain>
    </source>
</reference>
<comment type="function">
    <text evidence="1">This protein binds to the 23S rRNA, and is important in its secondary structure. It is located near the subunit interface in the base of the L7/L12 stalk, and near the tRNA binding site of the peptidyltransferase center.</text>
</comment>
<comment type="subunit">
    <text evidence="1">Part of the 50S ribosomal subunit.</text>
</comment>
<comment type="similarity">
    <text evidence="1">Belongs to the universal ribosomal protein uL6 family.</text>
</comment>
<keyword id="KW-0687">Ribonucleoprotein</keyword>
<keyword id="KW-0689">Ribosomal protein</keyword>
<keyword id="KW-0694">RNA-binding</keyword>
<keyword id="KW-0699">rRNA-binding</keyword>